<accession>Q9ZLL5</accession>
<evidence type="ECO:0000255" key="1">
    <source>
        <dbReference type="HAMAP-Rule" id="MF_00209"/>
    </source>
</evidence>
<comment type="function">
    <text evidence="1">Catalyzes the hydrolysis of inorganic pyrophosphate (PPi) forming two phosphate ions.</text>
</comment>
<comment type="catalytic activity">
    <reaction evidence="1">
        <text>diphosphate + H2O = 2 phosphate + H(+)</text>
        <dbReference type="Rhea" id="RHEA:24576"/>
        <dbReference type="ChEBI" id="CHEBI:15377"/>
        <dbReference type="ChEBI" id="CHEBI:15378"/>
        <dbReference type="ChEBI" id="CHEBI:33019"/>
        <dbReference type="ChEBI" id="CHEBI:43474"/>
        <dbReference type="EC" id="3.6.1.1"/>
    </reaction>
</comment>
<comment type="cofactor">
    <cofactor evidence="1">
        <name>Mg(2+)</name>
        <dbReference type="ChEBI" id="CHEBI:18420"/>
    </cofactor>
</comment>
<comment type="subunit">
    <text evidence="1">Homohexamer.</text>
</comment>
<comment type="subcellular location">
    <subcellularLocation>
        <location evidence="1">Cytoplasm</location>
    </subcellularLocation>
</comment>
<comment type="similarity">
    <text evidence="1">Belongs to the PPase family.</text>
</comment>
<dbReference type="EC" id="3.6.1.1" evidence="1"/>
<dbReference type="EMBL" id="AE001439">
    <property type="protein sequence ID" value="AAD06146.1"/>
    <property type="molecule type" value="Genomic_DNA"/>
</dbReference>
<dbReference type="PIR" id="G71916">
    <property type="entry name" value="G71916"/>
</dbReference>
<dbReference type="RefSeq" id="WP_001047002.1">
    <property type="nucleotide sequence ID" value="NZ_CP011330.1"/>
</dbReference>
<dbReference type="SMR" id="Q9ZLL5"/>
<dbReference type="KEGG" id="hpj:jhp_0564"/>
<dbReference type="PATRIC" id="fig|85963.30.peg.425"/>
<dbReference type="eggNOG" id="COG0221">
    <property type="taxonomic scope" value="Bacteria"/>
</dbReference>
<dbReference type="Proteomes" id="UP000000804">
    <property type="component" value="Chromosome"/>
</dbReference>
<dbReference type="GO" id="GO:0005737">
    <property type="term" value="C:cytoplasm"/>
    <property type="evidence" value="ECO:0007669"/>
    <property type="project" value="UniProtKB-SubCell"/>
</dbReference>
<dbReference type="GO" id="GO:0004427">
    <property type="term" value="F:inorganic diphosphate phosphatase activity"/>
    <property type="evidence" value="ECO:0007669"/>
    <property type="project" value="UniProtKB-UniRule"/>
</dbReference>
<dbReference type="GO" id="GO:0000287">
    <property type="term" value="F:magnesium ion binding"/>
    <property type="evidence" value="ECO:0007669"/>
    <property type="project" value="UniProtKB-UniRule"/>
</dbReference>
<dbReference type="GO" id="GO:0006796">
    <property type="term" value="P:phosphate-containing compound metabolic process"/>
    <property type="evidence" value="ECO:0007669"/>
    <property type="project" value="InterPro"/>
</dbReference>
<dbReference type="CDD" id="cd00412">
    <property type="entry name" value="pyrophosphatase"/>
    <property type="match status" value="1"/>
</dbReference>
<dbReference type="FunFam" id="3.90.80.10:FF:000003">
    <property type="entry name" value="Inorganic pyrophosphatase"/>
    <property type="match status" value="1"/>
</dbReference>
<dbReference type="Gene3D" id="3.90.80.10">
    <property type="entry name" value="Inorganic pyrophosphatase"/>
    <property type="match status" value="1"/>
</dbReference>
<dbReference type="HAMAP" id="MF_00209">
    <property type="entry name" value="Inorganic_PPase"/>
    <property type="match status" value="1"/>
</dbReference>
<dbReference type="InterPro" id="IPR008162">
    <property type="entry name" value="Pyrophosphatase"/>
</dbReference>
<dbReference type="InterPro" id="IPR036649">
    <property type="entry name" value="Pyrophosphatase_sf"/>
</dbReference>
<dbReference type="NCBIfam" id="NF002317">
    <property type="entry name" value="PRK01250.1"/>
    <property type="match status" value="1"/>
</dbReference>
<dbReference type="PANTHER" id="PTHR10286">
    <property type="entry name" value="INORGANIC PYROPHOSPHATASE"/>
    <property type="match status" value="1"/>
</dbReference>
<dbReference type="Pfam" id="PF00719">
    <property type="entry name" value="Pyrophosphatase"/>
    <property type="match status" value="1"/>
</dbReference>
<dbReference type="SUPFAM" id="SSF50324">
    <property type="entry name" value="Inorganic pyrophosphatase"/>
    <property type="match status" value="1"/>
</dbReference>
<dbReference type="PROSITE" id="PS00387">
    <property type="entry name" value="PPASE"/>
    <property type="match status" value="1"/>
</dbReference>
<proteinExistence type="inferred from homology"/>
<reference key="1">
    <citation type="journal article" date="1999" name="Nature">
        <title>Genomic sequence comparison of two unrelated isolates of the human gastric pathogen Helicobacter pylori.</title>
        <authorList>
            <person name="Alm R.A."/>
            <person name="Ling L.-S.L."/>
            <person name="Moir D.T."/>
            <person name="King B.L."/>
            <person name="Brown E.D."/>
            <person name="Doig P.C."/>
            <person name="Smith D.R."/>
            <person name="Noonan B."/>
            <person name="Guild B.C."/>
            <person name="deJonge B.L."/>
            <person name="Carmel G."/>
            <person name="Tummino P.J."/>
            <person name="Caruso A."/>
            <person name="Uria-Nickelsen M."/>
            <person name="Mills D.M."/>
            <person name="Ives C."/>
            <person name="Gibson R."/>
            <person name="Merberg D."/>
            <person name="Mills S.D."/>
            <person name="Jiang Q."/>
            <person name="Taylor D.E."/>
            <person name="Vovis G.F."/>
            <person name="Trust T.J."/>
        </authorList>
    </citation>
    <scope>NUCLEOTIDE SEQUENCE [LARGE SCALE GENOMIC DNA]</scope>
    <source>
        <strain>J99 / ATCC 700824</strain>
    </source>
</reference>
<feature type="chain" id="PRO_0000137502" description="Inorganic pyrophosphatase">
    <location>
        <begin position="1"/>
        <end position="173"/>
    </location>
</feature>
<feature type="binding site" evidence="1">
    <location>
        <position position="28"/>
    </location>
    <ligand>
        <name>substrate</name>
    </ligand>
</feature>
<feature type="binding site" evidence="1">
    <location>
        <position position="42"/>
    </location>
    <ligand>
        <name>substrate</name>
    </ligand>
</feature>
<feature type="binding site" evidence="1">
    <location>
        <position position="54"/>
    </location>
    <ligand>
        <name>substrate</name>
    </ligand>
</feature>
<feature type="binding site" evidence="1">
    <location>
        <position position="64"/>
    </location>
    <ligand>
        <name>Mg(2+)</name>
        <dbReference type="ChEBI" id="CHEBI:18420"/>
        <label>1</label>
    </ligand>
</feature>
<feature type="binding site" evidence="1">
    <location>
        <position position="69"/>
    </location>
    <ligand>
        <name>Mg(2+)</name>
        <dbReference type="ChEBI" id="CHEBI:18420"/>
        <label>1</label>
    </ligand>
</feature>
<feature type="binding site" evidence="1">
    <location>
        <position position="69"/>
    </location>
    <ligand>
        <name>Mg(2+)</name>
        <dbReference type="ChEBI" id="CHEBI:18420"/>
        <label>2</label>
    </ligand>
</feature>
<feature type="binding site" evidence="1">
    <location>
        <position position="101"/>
    </location>
    <ligand>
        <name>Mg(2+)</name>
        <dbReference type="ChEBI" id="CHEBI:18420"/>
        <label>1</label>
    </ligand>
</feature>
<feature type="binding site" evidence="1">
    <location>
        <position position="140"/>
    </location>
    <ligand>
        <name>substrate</name>
    </ligand>
</feature>
<keyword id="KW-0963">Cytoplasm</keyword>
<keyword id="KW-0378">Hydrolase</keyword>
<keyword id="KW-0460">Magnesium</keyword>
<keyword id="KW-0479">Metal-binding</keyword>
<protein>
    <recommendedName>
        <fullName evidence="1">Inorganic pyrophosphatase</fullName>
        <ecNumber evidence="1">3.6.1.1</ecNumber>
    </recommendedName>
    <alternativeName>
        <fullName evidence="1">Pyrophosphate phospho-hydrolase</fullName>
        <shortName evidence="1">PPase</shortName>
    </alternativeName>
</protein>
<name>IPYR_HELPJ</name>
<gene>
    <name evidence="1" type="primary">ppa</name>
    <name type="ordered locus">jhp_0564</name>
</gene>
<organism>
    <name type="scientific">Helicobacter pylori (strain J99 / ATCC 700824)</name>
    <name type="common">Campylobacter pylori J99</name>
    <dbReference type="NCBI Taxonomy" id="85963"/>
    <lineage>
        <taxon>Bacteria</taxon>
        <taxon>Pseudomonadati</taxon>
        <taxon>Campylobacterota</taxon>
        <taxon>Epsilonproteobacteria</taxon>
        <taxon>Campylobacterales</taxon>
        <taxon>Helicobacteraceae</taxon>
        <taxon>Helicobacter</taxon>
    </lineage>
</organism>
<sequence>MNLDQLEVSHDADSLCVVIEISKHSNIKYELDKESGALMVDRVLYGAQNYPANYGFVPNTLGSDGDPVDALVLSDVAFQAGSVVKARLVGVLNMEDESGMDEKLLALPIDKIDPTHSYVKDIDDLSKHTLDKIKHFFETYKDLEPNKWVKVKGFENKESAIKVLEKAIKAYQG</sequence>